<evidence type="ECO:0000255" key="1"/>
<evidence type="ECO:0000256" key="2">
    <source>
        <dbReference type="SAM" id="MobiDB-lite"/>
    </source>
</evidence>
<evidence type="ECO:0000269" key="3">
    <source>
    </source>
</evidence>
<evidence type="ECO:0000269" key="4">
    <source>
    </source>
</evidence>
<evidence type="ECO:0000303" key="5">
    <source>
    </source>
</evidence>
<evidence type="ECO:0000305" key="6"/>
<evidence type="ECO:0000312" key="7">
    <source>
        <dbReference type="Araport" id="AT1G24460"/>
    </source>
</evidence>
<evidence type="ECO:0000312" key="8">
    <source>
        <dbReference type="EMBL" id="AAF97958.1"/>
    </source>
</evidence>
<comment type="function">
    <text evidence="3 4">Tethering factor involved in vesicle fusion at the trans-Golgi network (TGN) thus being required for efficient protein trafficking to the vacuole (PubMed:21521696). Implicated in resistance to salt and osmotic stresses (PubMed:21521696). Modulates the cell morphology (e.g. epidermal cell file rotation (CFR) and cell expansion) in mature regions of roots and the base of hypocotyls as well as root skewing, a process leading to root movement within the soil in order to maximize anchorage and nutrient acquisition, probably by regulating microtubule stabilization independently of their orientation (PubMed:28399805).</text>
</comment>
<comment type="subunit">
    <text evidence="3">Interacts with SYP41.</text>
</comment>
<comment type="subcellular location">
    <subcellularLocation>
        <location evidence="3">Golgi apparatus</location>
        <location evidence="3">trans-Golgi network membrane</location>
        <topology evidence="1">Single-pass type IV membrane protein</topology>
    </subcellularLocation>
</comment>
<comment type="tissue specificity">
    <text evidence="3">Expressed ubiquitously in roots, leaves and flowers, and, to a lower extent, in stems.</text>
</comment>
<comment type="developmental stage">
    <text evidence="3">Highly expressed during germination, flower development, and silique maturation.</text>
</comment>
<comment type="disruption phenotype">
    <text evidence="3 4">Increased sensitivity to high concentrations of NaCl, KCl and LiCl, and also to mannitol-induced osmotic stress (PubMed:21521696). Altered localization of SYP61 and abnormal partial secretion of vacuolar proteins to the apoplast (PubMed:21521696). Enhanced root skewing and epidermal cell file rotation (CFR) probably due to microtubule destabilization, thus leading to abnormal cell morphology in mature regions of roots and the base of hypocotyls (PubMed:28399805).</text>
</comment>
<comment type="sequence caution" evidence="6">
    <conflict type="erroneous gene model prediction">
        <sequence resource="EMBL-CDS" id="AAF97958"/>
    </conflict>
</comment>
<comment type="sequence caution" evidence="6">
    <conflict type="erroneous gene model prediction">
        <sequence resource="EMBL-CDS" id="AEE30533"/>
    </conflict>
</comment>
<accession>F4I9A2</accession>
<accession>F1BCU1</accession>
<accession>Q8GXQ6</accession>
<accession>Q9FYL7</accession>
<reference key="1">
    <citation type="journal article" date="2011" name="Plant Physiol.">
        <title>TNO1 is involved in salt tolerance and vacuolar trafficking in Arabidopsis.</title>
        <authorList>
            <person name="Kim S.-J."/>
            <person name="Bassham D.C."/>
        </authorList>
    </citation>
    <scope>NUCLEOTIDE SEQUENCE [MRNA]</scope>
    <scope>FUNCTION</scope>
    <scope>DISRUPTION PHENOTYPE</scope>
    <scope>SUBCELLULAR LOCATION</scope>
    <scope>INTERACTION WITH SYP41</scope>
    <scope>TISSUE SPECIFICITY</scope>
    <scope>DEVELOPMENTAL STAGE</scope>
    <source>
        <tissue>Silique</tissue>
    </source>
</reference>
<reference key="2">
    <citation type="journal article" date="2000" name="Nature">
        <title>Sequence and analysis of chromosome 1 of the plant Arabidopsis thaliana.</title>
        <authorList>
            <person name="Theologis A."/>
            <person name="Ecker J.R."/>
            <person name="Palm C.J."/>
            <person name="Federspiel N.A."/>
            <person name="Kaul S."/>
            <person name="White O."/>
            <person name="Alonso J."/>
            <person name="Altafi H."/>
            <person name="Araujo R."/>
            <person name="Bowman C.L."/>
            <person name="Brooks S.Y."/>
            <person name="Buehler E."/>
            <person name="Chan A."/>
            <person name="Chao Q."/>
            <person name="Chen H."/>
            <person name="Cheuk R.F."/>
            <person name="Chin C.W."/>
            <person name="Chung M.K."/>
            <person name="Conn L."/>
            <person name="Conway A.B."/>
            <person name="Conway A.R."/>
            <person name="Creasy T.H."/>
            <person name="Dewar K."/>
            <person name="Dunn P."/>
            <person name="Etgu P."/>
            <person name="Feldblyum T.V."/>
            <person name="Feng J.-D."/>
            <person name="Fong B."/>
            <person name="Fujii C.Y."/>
            <person name="Gill J.E."/>
            <person name="Goldsmith A.D."/>
            <person name="Haas B."/>
            <person name="Hansen N.F."/>
            <person name="Hughes B."/>
            <person name="Huizar L."/>
            <person name="Hunter J.L."/>
            <person name="Jenkins J."/>
            <person name="Johnson-Hopson C."/>
            <person name="Khan S."/>
            <person name="Khaykin E."/>
            <person name="Kim C.J."/>
            <person name="Koo H.L."/>
            <person name="Kremenetskaia I."/>
            <person name="Kurtz D.B."/>
            <person name="Kwan A."/>
            <person name="Lam B."/>
            <person name="Langin-Hooper S."/>
            <person name="Lee A."/>
            <person name="Lee J.M."/>
            <person name="Lenz C.A."/>
            <person name="Li J.H."/>
            <person name="Li Y.-P."/>
            <person name="Lin X."/>
            <person name="Liu S.X."/>
            <person name="Liu Z.A."/>
            <person name="Luros J.S."/>
            <person name="Maiti R."/>
            <person name="Marziali A."/>
            <person name="Militscher J."/>
            <person name="Miranda M."/>
            <person name="Nguyen M."/>
            <person name="Nierman W.C."/>
            <person name="Osborne B.I."/>
            <person name="Pai G."/>
            <person name="Peterson J."/>
            <person name="Pham P.K."/>
            <person name="Rizzo M."/>
            <person name="Rooney T."/>
            <person name="Rowley D."/>
            <person name="Sakano H."/>
            <person name="Salzberg S.L."/>
            <person name="Schwartz J.R."/>
            <person name="Shinn P."/>
            <person name="Southwick A.M."/>
            <person name="Sun H."/>
            <person name="Tallon L.J."/>
            <person name="Tambunga G."/>
            <person name="Toriumi M.J."/>
            <person name="Town C.D."/>
            <person name="Utterback T."/>
            <person name="Van Aken S."/>
            <person name="Vaysberg M."/>
            <person name="Vysotskaia V.S."/>
            <person name="Walker M."/>
            <person name="Wu D."/>
            <person name="Yu G."/>
            <person name="Fraser C.M."/>
            <person name="Venter J.C."/>
            <person name="Davis R.W."/>
        </authorList>
    </citation>
    <scope>NUCLEOTIDE SEQUENCE [LARGE SCALE GENOMIC DNA]</scope>
    <source>
        <strain>cv. Columbia</strain>
    </source>
</reference>
<reference key="3">
    <citation type="journal article" date="2017" name="Plant J.">
        <title>Araport11: a complete reannotation of the Arabidopsis thaliana reference genome.</title>
        <authorList>
            <person name="Cheng C.Y."/>
            <person name="Krishnakumar V."/>
            <person name="Chan A.P."/>
            <person name="Thibaud-Nissen F."/>
            <person name="Schobel S."/>
            <person name="Town C.D."/>
        </authorList>
    </citation>
    <scope>GENOME REANNOTATION</scope>
    <source>
        <strain>cv. Columbia</strain>
    </source>
</reference>
<reference key="4">
    <citation type="journal article" date="2002" name="Science">
        <title>Functional annotation of a full-length Arabidopsis cDNA collection.</title>
        <authorList>
            <person name="Seki M."/>
            <person name="Narusaka M."/>
            <person name="Kamiya A."/>
            <person name="Ishida J."/>
            <person name="Satou M."/>
            <person name="Sakurai T."/>
            <person name="Nakajima M."/>
            <person name="Enju A."/>
            <person name="Akiyama K."/>
            <person name="Oono Y."/>
            <person name="Muramatsu M."/>
            <person name="Hayashizaki Y."/>
            <person name="Kawai J."/>
            <person name="Carninci P."/>
            <person name="Itoh M."/>
            <person name="Ishii Y."/>
            <person name="Arakawa T."/>
            <person name="Shibata K."/>
            <person name="Shinagawa A."/>
            <person name="Shinozaki K."/>
        </authorList>
    </citation>
    <scope>NUCLEOTIDE SEQUENCE [LARGE SCALE MRNA] OF 1464-1767</scope>
    <source>
        <strain>cv. Columbia</strain>
    </source>
</reference>
<reference key="5">
    <citation type="journal article" date="2009" name="Plant Physiol.">
        <title>Large-scale Arabidopsis phosphoproteome profiling reveals novel chloroplast kinase substrates and phosphorylation networks.</title>
        <authorList>
            <person name="Reiland S."/>
            <person name="Messerli G."/>
            <person name="Baerenfaller K."/>
            <person name="Gerrits B."/>
            <person name="Endler A."/>
            <person name="Grossmann J."/>
            <person name="Gruissem W."/>
            <person name="Baginsky S."/>
        </authorList>
    </citation>
    <scope>IDENTIFICATION BY MASS SPECTROMETRY [LARGE SCALE ANALYSIS]</scope>
</reference>
<reference key="6">
    <citation type="journal article" date="2017" name="BMC Plant Biol.">
        <title>TNO1, a TGN-localized SNARE-interacting protein, modulates root skewing in Arabidopsis thaliana.</title>
        <authorList>
            <person name="Roy R."/>
            <person name="Bassham D.C."/>
        </authorList>
    </citation>
    <scope>FUNCTION</scope>
    <scope>DISRUPTION PHENOTYPE</scope>
    <source>
        <strain>cv. Columbia</strain>
    </source>
</reference>
<name>TNO1_ARATH</name>
<protein>
    <recommendedName>
        <fullName evidence="5">Trans-Golgi network-localized SYP41-interacting protein 1</fullName>
        <shortName evidence="5">TGN-localized SYP41-interacting protein 1</shortName>
    </recommendedName>
</protein>
<sequence length="1767" mass="197632">MHEKDDLPQDSIADGIENDDESNGQEEEELDPDQGTAFVDSKEDMFVDAPEELNFDTPSKEALTTDDDDNDDLGTHFNIEKGDWEKELAGLQEQFKLLTGENDLTGEDGNTTVDIVSRFSKFLKTAKEERIQHEVALKELHGVISGRDDEIADLTTKISELSSSQPVSEMGDQAQNLEHLEAATDRIMVSLSNVFGEGELQYGSSISEKLAHLENRVSFLGAKYTEFYYGADQLRKCLASDVLDLSFQEDFGSALGAACSELFELKQKEAAFFERLSHLEDENRNFVEQVNREKEMCESMRTEFEKLKAELELEKTKCTNTKEKLSMAVTKGKALVQNRDALKHQLSEKTTELANRLTELQEKEIALESSEVMKGQLEQSLTEKTDELEKCYAELNDRSVSLEAYELTKKELEQSLAEKTKELEECLTKLQEMSTALDQSELDKGELAKSDAMVASYQEMLSVRNSIIENIETILSNIYTPEEGHSFDIVEKVRSLAEERKELTNVSQEYNRLKDLIVSIDLPEEMSQSSLESRLAWLRESFLQGKDEVNALQNRIESVSMSLSAEMEEKSNIRKELDDLSFSLKKMEETAERGSLEREEIVRRLVETSGLMTEGVEDHTSSDINLLVDRSFDKIEKQIRDSSDSSYGNEEIFEAFQSLLYVRDLEFSLCKEMLGEGELISFQVSNLSDELKIASQELAFVKEEKIALEKDLERSEEKSALLRDKLSMAIKKGKGLVQDREKFKTQLDEKKSEIEKLMLELQQLGGTVDGYKNQIDMLSRDLERTKELETELVATKEERDQLQQSLSLIDTLLQKVMKSVEIIALPVDLASEDPSEKIDRLAGYIQEVQLARVEEQEEIEKVKSEVDALTSKLAETQTALKLVEDALSTAEDNISRLTEENRNVQAAKENAELELQKAVADASSVASELDEVLATKSTLEAALMQAERNISDIISEKEEAQGRTATAEMEQEMLQKEASIQKNKLTEAHSTINSLEETLAQTESNMDSLSKQIEDDKVLTTSLKNELEKLKIEAEFERNKMAEASLTIVSHEEALMKAENSLSALQGEMVKAEGEISTLSSKLNVCMEELAGSSGNSQSKSLEIITHLDNLQMLLKDGGLISKVNEFLQRKFKSLRDVDVIARDITRNIGENGLLAGEMGNAEDDSTEAKSLLSDLDNSVNTEPENSQGSAADEDEISSSLRKMAEGVRLRNKTLENNFEGFSTSIDTLIATLMQNMTAARADVLNIVGHNSSLEEQVRSVENIVREQENTISALQKDLSSLISACGAAARELQLEVKNNLLELVQFQENENGGEMESTEDPQELHVSECAQRIKELSSAAEKACATLKLFETTNNAAATVIRDMENRLTEASVALEKAVLERDLNQTKVSSSEAKVESLEELCQDLKLQLENLRVKEEKWHEKEVELSTLYDKLLVQEQEAKENLIPASDMRTLFDKINGIEVPSVDLVNGLDPQSPYDVKKLFAIVDSVTEMQHQIDILSYGQKELNSTLAEKDLEIQGLKKATEAESTTELELVKAKNELSKLISGLEKLLGILASNNPVVDPNFSESWTLVQALEKKITSLLLESESSKSRAQELGLKLAGSEKLVDKLSLRVKEFEEKLQTKAIQPDIVQERSIFETPRAPSTSEISEIEDKGALGIKSISPVPTAAQVRTVRKGSTDHLSINIDSESEHLMNNNETDEDKGHVFKSLNMSGLIPTQGKIIADRVDGIWVSGGRVLMSRPQARLGVMVYSLLLHLWLLASIL</sequence>
<organism>
    <name type="scientific">Arabidopsis thaliana</name>
    <name type="common">Mouse-ear cress</name>
    <dbReference type="NCBI Taxonomy" id="3702"/>
    <lineage>
        <taxon>Eukaryota</taxon>
        <taxon>Viridiplantae</taxon>
        <taxon>Streptophyta</taxon>
        <taxon>Embryophyta</taxon>
        <taxon>Tracheophyta</taxon>
        <taxon>Spermatophyta</taxon>
        <taxon>Magnoliopsida</taxon>
        <taxon>eudicotyledons</taxon>
        <taxon>Gunneridae</taxon>
        <taxon>Pentapetalae</taxon>
        <taxon>rosids</taxon>
        <taxon>malvids</taxon>
        <taxon>Brassicales</taxon>
        <taxon>Brassicaceae</taxon>
        <taxon>Camelineae</taxon>
        <taxon>Arabidopsis</taxon>
    </lineage>
</organism>
<feature type="chain" id="PRO_0000454396" description="Trans-Golgi network-localized SYP41-interacting protein 1">
    <location>
        <begin position="1"/>
        <end position="1767"/>
    </location>
</feature>
<feature type="topological domain" description="Cytoplasmic" evidence="6">
    <location>
        <begin position="1"/>
        <end position="1748"/>
    </location>
</feature>
<feature type="transmembrane region" description="Helical; Anchor for type IV membrane protein" evidence="1">
    <location>
        <begin position="1749"/>
        <end position="1766"/>
    </location>
</feature>
<feature type="topological domain" description="Vesicular" evidence="6">
    <location>
        <position position="1767"/>
    </location>
</feature>
<feature type="region of interest" description="Disordered" evidence="2">
    <location>
        <begin position="1"/>
        <end position="72"/>
    </location>
</feature>
<feature type="region of interest" description="Disordered" evidence="2">
    <location>
        <begin position="1177"/>
        <end position="1198"/>
    </location>
</feature>
<feature type="coiled-coil region" evidence="1">
    <location>
        <begin position="276"/>
        <end position="436"/>
    </location>
</feature>
<feature type="coiled-coil region" evidence="1">
    <location>
        <begin position="493"/>
        <end position="516"/>
    </location>
</feature>
<feature type="coiled-coil region" evidence="1">
    <location>
        <begin position="570"/>
        <end position="590"/>
    </location>
</feature>
<feature type="coiled-coil region" evidence="1">
    <location>
        <begin position="684"/>
        <end position="805"/>
    </location>
</feature>
<feature type="coiled-coil region" evidence="1">
    <location>
        <begin position="845"/>
        <end position="1082"/>
    </location>
</feature>
<feature type="coiled-coil region" evidence="1">
    <location>
        <begin position="1251"/>
        <end position="1310"/>
    </location>
</feature>
<feature type="coiled-coil region" evidence="1">
    <location>
        <begin position="1362"/>
        <end position="1424"/>
    </location>
</feature>
<feature type="coiled-coil region" evidence="1">
    <location>
        <begin position="1522"/>
        <end position="1542"/>
    </location>
</feature>
<feature type="coiled-coil region" evidence="1">
    <location>
        <begin position="1603"/>
        <end position="1630"/>
    </location>
</feature>
<feature type="compositionally biased region" description="Acidic residues" evidence="2">
    <location>
        <begin position="16"/>
        <end position="32"/>
    </location>
</feature>
<feature type="compositionally biased region" description="Polar residues" evidence="2">
    <location>
        <begin position="1177"/>
        <end position="1190"/>
    </location>
</feature>
<feature type="sequence conflict" description="In Ref. 1; ADM94222." evidence="6" ref="1">
    <original>R</original>
    <variation>G</variation>
    <location>
        <position position="275"/>
    </location>
</feature>
<feature type="sequence conflict" description="In Ref. 1; ADM94222." evidence="6" ref="1">
    <original>Q</original>
    <variation>H</variation>
    <location>
        <position position="971"/>
    </location>
</feature>
<feature type="sequence conflict" description="In Ref. 1; ADM94222." evidence="6" ref="1">
    <original>C</original>
    <variation>R</variation>
    <location>
        <position position="1404"/>
    </location>
</feature>
<feature type="sequence conflict" description="In Ref. 1; ADM94222." evidence="6" ref="1">
    <original>E</original>
    <variation>K</variation>
    <location>
        <position position="1425"/>
    </location>
</feature>
<feature type="sequence conflict" description="In Ref. 1; ADM94222." evidence="6" ref="1">
    <original>N</original>
    <variation>H</variation>
    <location>
        <position position="1445"/>
    </location>
</feature>
<feature type="sequence conflict" description="In Ref. 4; BAC42730." evidence="6" ref="4">
    <original>L</original>
    <variation>M</variation>
    <location>
        <position position="1554"/>
    </location>
</feature>
<gene>
    <name evidence="5" type="primary">TNO1</name>
    <name evidence="7" type="ordered locus">At1g24460</name>
    <name evidence="8" type="ORF">F21J9.12</name>
</gene>
<keyword id="KW-0175">Coiled coil</keyword>
<keyword id="KW-0333">Golgi apparatus</keyword>
<keyword id="KW-0472">Membrane</keyword>
<keyword id="KW-1185">Reference proteome</keyword>
<keyword id="KW-0812">Transmembrane</keyword>
<keyword id="KW-1133">Transmembrane helix</keyword>
<proteinExistence type="evidence at protein level"/>
<dbReference type="EMBL" id="HM776995">
    <property type="protein sequence ID" value="ADM94222.1"/>
    <property type="molecule type" value="mRNA"/>
</dbReference>
<dbReference type="EMBL" id="AC000103">
    <property type="protein sequence ID" value="AAF97958.1"/>
    <property type="status" value="ALT_SEQ"/>
    <property type="molecule type" value="Genomic_DNA"/>
</dbReference>
<dbReference type="EMBL" id="CP002684">
    <property type="protein sequence ID" value="AEE30533.1"/>
    <property type="status" value="ALT_SEQ"/>
    <property type="molecule type" value="Genomic_DNA"/>
</dbReference>
<dbReference type="EMBL" id="AK118102">
    <property type="protein sequence ID" value="BAC42730.1"/>
    <property type="molecule type" value="mRNA"/>
</dbReference>
<dbReference type="PIR" id="F86378">
    <property type="entry name" value="F86378"/>
</dbReference>
<dbReference type="RefSeq" id="NP_001185085.1">
    <property type="nucleotide sequence ID" value="NM_001198156.2"/>
</dbReference>
<dbReference type="SMR" id="F4I9A2"/>
<dbReference type="FunCoup" id="F4I9A2">
    <property type="interactions" value="1058"/>
</dbReference>
<dbReference type="iPTMnet" id="F4I9A2"/>
<dbReference type="ProteomicsDB" id="218243"/>
<dbReference type="GeneID" id="839062"/>
<dbReference type="KEGG" id="ath:AT1G24460"/>
<dbReference type="Araport" id="AT1G24460"/>
<dbReference type="TAIR" id="AT1G24460">
    <property type="gene designation" value="TNO1"/>
</dbReference>
<dbReference type="HOGENOM" id="CLU_002578_0_0_1"/>
<dbReference type="InParanoid" id="F4I9A2"/>
<dbReference type="PRO" id="PR:F4I9A2"/>
<dbReference type="Proteomes" id="UP000006548">
    <property type="component" value="Chromosome 1"/>
</dbReference>
<dbReference type="ExpressionAtlas" id="F4I9A2">
    <property type="expression patterns" value="baseline and differential"/>
</dbReference>
<dbReference type="GO" id="GO:0032588">
    <property type="term" value="C:trans-Golgi network membrane"/>
    <property type="evidence" value="ECO:0000314"/>
    <property type="project" value="UniProtKB"/>
</dbReference>
<dbReference type="GO" id="GO:0006886">
    <property type="term" value="P:intracellular protein transport"/>
    <property type="evidence" value="ECO:0000315"/>
    <property type="project" value="UniProtKB"/>
</dbReference>
<dbReference type="GO" id="GO:0006623">
    <property type="term" value="P:protein targeting to vacuole"/>
    <property type="evidence" value="ECO:0000315"/>
    <property type="project" value="UniProtKB"/>
</dbReference>
<dbReference type="GO" id="GO:0022604">
    <property type="term" value="P:regulation of cell morphogenesis"/>
    <property type="evidence" value="ECO:0000315"/>
    <property type="project" value="UniProtKB"/>
</dbReference>
<dbReference type="GO" id="GO:0070507">
    <property type="term" value="P:regulation of microtubule cytoskeleton organization"/>
    <property type="evidence" value="ECO:0000315"/>
    <property type="project" value="UniProtKB"/>
</dbReference>
<dbReference type="GO" id="GO:0010226">
    <property type="term" value="P:response to lithium ion"/>
    <property type="evidence" value="ECO:0000315"/>
    <property type="project" value="UniProtKB"/>
</dbReference>
<dbReference type="GO" id="GO:0010555">
    <property type="term" value="P:response to mannitol"/>
    <property type="evidence" value="ECO:0000315"/>
    <property type="project" value="UniProtKB"/>
</dbReference>
<dbReference type="GO" id="GO:0035864">
    <property type="term" value="P:response to potassium ion"/>
    <property type="evidence" value="ECO:0000315"/>
    <property type="project" value="UniProtKB"/>
</dbReference>
<dbReference type="GO" id="GO:0009651">
    <property type="term" value="P:response to salt stress"/>
    <property type="evidence" value="ECO:0000315"/>
    <property type="project" value="UniProtKB"/>
</dbReference>
<dbReference type="GO" id="GO:0010053">
    <property type="term" value="P:root epidermal cell differentiation"/>
    <property type="evidence" value="ECO:0000315"/>
    <property type="project" value="UniProtKB"/>
</dbReference>
<dbReference type="GO" id="GO:0010015">
    <property type="term" value="P:root morphogenesis"/>
    <property type="evidence" value="ECO:0000315"/>
    <property type="project" value="UniProtKB"/>
</dbReference>
<dbReference type="GO" id="GO:0007034">
    <property type="term" value="P:vacuolar transport"/>
    <property type="evidence" value="ECO:0000315"/>
    <property type="project" value="UniProtKB"/>
</dbReference>
<dbReference type="GO" id="GO:0006906">
    <property type="term" value="P:vesicle fusion"/>
    <property type="evidence" value="ECO:0000315"/>
    <property type="project" value="UniProtKB"/>
</dbReference>
<dbReference type="PANTHER" id="PTHR32083">
    <property type="entry name" value="CILIA AND FLAGELLA-ASSOCIATED PROTEIN 58-RELATED"/>
    <property type="match status" value="1"/>
</dbReference>
<dbReference type="PANTHER" id="PTHR32083:SF48">
    <property type="entry name" value="TRANS-GOLGI NETWORK-LOCALIZED SYP41-INTERACTING PROTEIN 1"/>
    <property type="match status" value="1"/>
</dbReference>
<dbReference type="SUPFAM" id="SSF57997">
    <property type="entry name" value="Tropomyosin"/>
    <property type="match status" value="1"/>
</dbReference>